<protein>
    <recommendedName>
        <fullName evidence="1">Urease accessory protein UreD</fullName>
    </recommendedName>
</protein>
<organism>
    <name type="scientific">Polynucleobacter asymbioticus (strain DSM 18221 / CIP 109841 / QLW-P1DMWA-1)</name>
    <name type="common">Polynucleobacter necessarius subsp. asymbioticus</name>
    <dbReference type="NCBI Taxonomy" id="312153"/>
    <lineage>
        <taxon>Bacteria</taxon>
        <taxon>Pseudomonadati</taxon>
        <taxon>Pseudomonadota</taxon>
        <taxon>Betaproteobacteria</taxon>
        <taxon>Burkholderiales</taxon>
        <taxon>Burkholderiaceae</taxon>
        <taxon>Polynucleobacter</taxon>
    </lineage>
</organism>
<reference key="1">
    <citation type="journal article" date="2012" name="Stand. Genomic Sci.">
        <title>Complete genome sequence of Polynucleobacter necessarius subsp. asymbioticus type strain (QLW-P1DMWA-1(T)).</title>
        <authorList>
            <person name="Meincke L."/>
            <person name="Copeland A."/>
            <person name="Lapidus A."/>
            <person name="Lucas S."/>
            <person name="Berry K.W."/>
            <person name="Del Rio T.G."/>
            <person name="Hammon N."/>
            <person name="Dalin E."/>
            <person name="Tice H."/>
            <person name="Pitluck S."/>
            <person name="Richardson P."/>
            <person name="Bruce D."/>
            <person name="Goodwin L."/>
            <person name="Han C."/>
            <person name="Tapia R."/>
            <person name="Detter J.C."/>
            <person name="Schmutz J."/>
            <person name="Brettin T."/>
            <person name="Larimer F."/>
            <person name="Land M."/>
            <person name="Hauser L."/>
            <person name="Kyrpides N.C."/>
            <person name="Ivanova N."/>
            <person name="Goker M."/>
            <person name="Woyke T."/>
            <person name="Wu Q.L."/>
            <person name="Pockl M."/>
            <person name="Hahn M.W."/>
            <person name="Klenk H.P."/>
        </authorList>
    </citation>
    <scope>NUCLEOTIDE SEQUENCE [LARGE SCALE GENOMIC DNA]</scope>
    <source>
        <strain>DSM 18221 / CIP 109841 / QLW-P1DMWA-1</strain>
    </source>
</reference>
<proteinExistence type="inferred from homology"/>
<keyword id="KW-0143">Chaperone</keyword>
<keyword id="KW-0963">Cytoplasm</keyword>
<keyword id="KW-0996">Nickel insertion</keyword>
<keyword id="KW-1185">Reference proteome</keyword>
<feature type="chain" id="PRO_0000340473" description="Urease accessory protein UreD">
    <location>
        <begin position="1"/>
        <end position="291"/>
    </location>
</feature>
<name>URED_POLAQ</name>
<dbReference type="EMBL" id="CP000655">
    <property type="protein sequence ID" value="ABP34412.1"/>
    <property type="status" value="ALT_INIT"/>
    <property type="molecule type" value="Genomic_DNA"/>
</dbReference>
<dbReference type="SMR" id="A4SY48"/>
<dbReference type="KEGG" id="pnu:Pnuc_1197"/>
<dbReference type="eggNOG" id="COG0829">
    <property type="taxonomic scope" value="Bacteria"/>
</dbReference>
<dbReference type="HOGENOM" id="CLU_056339_0_0_4"/>
<dbReference type="Proteomes" id="UP000000231">
    <property type="component" value="Chromosome"/>
</dbReference>
<dbReference type="GO" id="GO:0005737">
    <property type="term" value="C:cytoplasm"/>
    <property type="evidence" value="ECO:0007669"/>
    <property type="project" value="UniProtKB-SubCell"/>
</dbReference>
<dbReference type="GO" id="GO:0016151">
    <property type="term" value="F:nickel cation binding"/>
    <property type="evidence" value="ECO:0007669"/>
    <property type="project" value="UniProtKB-UniRule"/>
</dbReference>
<dbReference type="HAMAP" id="MF_01384">
    <property type="entry name" value="UreD"/>
    <property type="match status" value="1"/>
</dbReference>
<dbReference type="InterPro" id="IPR002669">
    <property type="entry name" value="UreD"/>
</dbReference>
<dbReference type="PANTHER" id="PTHR33643">
    <property type="entry name" value="UREASE ACCESSORY PROTEIN D"/>
    <property type="match status" value="1"/>
</dbReference>
<dbReference type="PANTHER" id="PTHR33643:SF1">
    <property type="entry name" value="UREASE ACCESSORY PROTEIN D"/>
    <property type="match status" value="1"/>
</dbReference>
<dbReference type="Pfam" id="PF01774">
    <property type="entry name" value="UreD"/>
    <property type="match status" value="1"/>
</dbReference>
<accession>A4SY48</accession>
<evidence type="ECO:0000255" key="1">
    <source>
        <dbReference type="HAMAP-Rule" id="MF_01384"/>
    </source>
</evidence>
<evidence type="ECO:0000305" key="2"/>
<gene>
    <name evidence="1" type="primary">ureD</name>
    <name type="ordered locus">Pnuc_1197</name>
</gene>
<comment type="function">
    <text evidence="1">Required for maturation of urease via the functional incorporation of the urease nickel metallocenter.</text>
</comment>
<comment type="subunit">
    <text evidence="1">UreD, UreF and UreG form a complex that acts as a GTP-hydrolysis-dependent molecular chaperone, activating the urease apoprotein by helping to assemble the nickel containing metallocenter of UreC. The UreE protein probably delivers the nickel.</text>
</comment>
<comment type="subcellular location">
    <subcellularLocation>
        <location evidence="1">Cytoplasm</location>
    </subcellularLocation>
</comment>
<comment type="similarity">
    <text evidence="1">Belongs to the UreD family.</text>
</comment>
<comment type="sequence caution" evidence="2">
    <conflict type="erroneous initiation">
        <sequence resource="EMBL-CDS" id="ABP34412"/>
    </conflict>
</comment>
<sequence>MFLAPDNAVKQLFRSLSPSWMAKLSLSYERTPIGTVLKKSLHEGPLRVQKALYPEGDDICHTVIIHPPAGIAGGDTLDIQVAVGKGSHVVLSTPSATKWYKSFKNPATQNVQFELGENAKLDWLPQENLFFKGANSNLITKLNLPASASFIGWDALMLGRHASGEEWSSGHIHLLNEIRRDGQLIWIENGHIDAEDPYSKSLPQLGSWPVCATLLALGPQCSNHLAENLSEMMPWTNSIRAGVTLMPQGIVIVRAVSIDIEMARNFMIDVWSKLRPIIHGVPAQPLRLWAS</sequence>